<sequence length="155" mass="17519">MATRALLAVIYASPNRCYISPSRIKIQSLTCSSSSHYYQRQSRKNHRIARSYSSDSDSSVLQPPDVARLAQTARISLTPAEIEECETKIRRVIDWFGQLQQVDVNSVEPAIRAEMDGGNLREDAPETFDNRDSIRASIPSFEDAYLKVPKILNKE</sequence>
<reference key="1">
    <citation type="submission" date="2000-02" db="EMBL/GenBank/DDBJ databases">
        <title>Arabidopsis thaliana Glu-tRNA(Gln) amidotransferase c subunit (gat c).</title>
        <authorList>
            <person name="Chang W."/>
            <person name="Soll D."/>
        </authorList>
    </citation>
    <scope>NUCLEOTIDE SEQUENCE [MRNA]</scope>
</reference>
<reference key="2">
    <citation type="journal article" date="1999" name="Nature">
        <title>Sequence and analysis of chromosome 4 of the plant Arabidopsis thaliana.</title>
        <authorList>
            <person name="Mayer K.F.X."/>
            <person name="Schueller C."/>
            <person name="Wambutt R."/>
            <person name="Murphy G."/>
            <person name="Volckaert G."/>
            <person name="Pohl T."/>
            <person name="Duesterhoeft A."/>
            <person name="Stiekema W."/>
            <person name="Entian K.-D."/>
            <person name="Terryn N."/>
            <person name="Harris B."/>
            <person name="Ansorge W."/>
            <person name="Brandt P."/>
            <person name="Grivell L.A."/>
            <person name="Rieger M."/>
            <person name="Weichselgartner M."/>
            <person name="de Simone V."/>
            <person name="Obermaier B."/>
            <person name="Mache R."/>
            <person name="Mueller M."/>
            <person name="Kreis M."/>
            <person name="Delseny M."/>
            <person name="Puigdomenech P."/>
            <person name="Watson M."/>
            <person name="Schmidtheini T."/>
            <person name="Reichert B."/>
            <person name="Portetelle D."/>
            <person name="Perez-Alonso M."/>
            <person name="Boutry M."/>
            <person name="Bancroft I."/>
            <person name="Vos P."/>
            <person name="Hoheisel J."/>
            <person name="Zimmermann W."/>
            <person name="Wedler H."/>
            <person name="Ridley P."/>
            <person name="Langham S.-A."/>
            <person name="McCullagh B."/>
            <person name="Bilham L."/>
            <person name="Robben J."/>
            <person name="van der Schueren J."/>
            <person name="Grymonprez B."/>
            <person name="Chuang Y.-J."/>
            <person name="Vandenbussche F."/>
            <person name="Braeken M."/>
            <person name="Weltjens I."/>
            <person name="Voet M."/>
            <person name="Bastiaens I."/>
            <person name="Aert R."/>
            <person name="Defoor E."/>
            <person name="Weitzenegger T."/>
            <person name="Bothe G."/>
            <person name="Ramsperger U."/>
            <person name="Hilbert H."/>
            <person name="Braun M."/>
            <person name="Holzer E."/>
            <person name="Brandt A."/>
            <person name="Peters S."/>
            <person name="van Staveren M."/>
            <person name="Dirkse W."/>
            <person name="Mooijman P."/>
            <person name="Klein Lankhorst R."/>
            <person name="Rose M."/>
            <person name="Hauf J."/>
            <person name="Koetter P."/>
            <person name="Berneiser S."/>
            <person name="Hempel S."/>
            <person name="Feldpausch M."/>
            <person name="Lamberth S."/>
            <person name="Van den Daele H."/>
            <person name="De Keyser A."/>
            <person name="Buysshaert C."/>
            <person name="Gielen J."/>
            <person name="Villarroel R."/>
            <person name="De Clercq R."/>
            <person name="van Montagu M."/>
            <person name="Rogers J."/>
            <person name="Cronin A."/>
            <person name="Quail M.A."/>
            <person name="Bray-Allen S."/>
            <person name="Clark L."/>
            <person name="Doggett J."/>
            <person name="Hall S."/>
            <person name="Kay M."/>
            <person name="Lennard N."/>
            <person name="McLay K."/>
            <person name="Mayes R."/>
            <person name="Pettett A."/>
            <person name="Rajandream M.A."/>
            <person name="Lyne M."/>
            <person name="Benes V."/>
            <person name="Rechmann S."/>
            <person name="Borkova D."/>
            <person name="Bloecker H."/>
            <person name="Scharfe M."/>
            <person name="Grimm M."/>
            <person name="Loehnert T.-H."/>
            <person name="Dose S."/>
            <person name="de Haan M."/>
            <person name="Maarse A.C."/>
            <person name="Schaefer M."/>
            <person name="Mueller-Auer S."/>
            <person name="Gabel C."/>
            <person name="Fuchs M."/>
            <person name="Fartmann B."/>
            <person name="Granderath K."/>
            <person name="Dauner D."/>
            <person name="Herzl A."/>
            <person name="Neumann S."/>
            <person name="Argiriou A."/>
            <person name="Vitale D."/>
            <person name="Liguori R."/>
            <person name="Piravandi E."/>
            <person name="Massenet O."/>
            <person name="Quigley F."/>
            <person name="Clabauld G."/>
            <person name="Muendlein A."/>
            <person name="Felber R."/>
            <person name="Schnabl S."/>
            <person name="Hiller R."/>
            <person name="Schmidt W."/>
            <person name="Lecharny A."/>
            <person name="Aubourg S."/>
            <person name="Chefdor F."/>
            <person name="Cooke R."/>
            <person name="Berger C."/>
            <person name="Monfort A."/>
            <person name="Casacuberta E."/>
            <person name="Gibbons T."/>
            <person name="Weber N."/>
            <person name="Vandenbol M."/>
            <person name="Bargues M."/>
            <person name="Terol J."/>
            <person name="Torres A."/>
            <person name="Perez-Perez A."/>
            <person name="Purnelle B."/>
            <person name="Bent E."/>
            <person name="Johnson S."/>
            <person name="Tacon D."/>
            <person name="Jesse T."/>
            <person name="Heijnen L."/>
            <person name="Schwarz S."/>
            <person name="Scholler P."/>
            <person name="Heber S."/>
            <person name="Francs P."/>
            <person name="Bielke C."/>
            <person name="Frishman D."/>
            <person name="Haase D."/>
            <person name="Lemcke K."/>
            <person name="Mewes H.-W."/>
            <person name="Stocker S."/>
            <person name="Zaccaria P."/>
            <person name="Bevan M."/>
            <person name="Wilson R.K."/>
            <person name="de la Bastide M."/>
            <person name="Habermann K."/>
            <person name="Parnell L."/>
            <person name="Dedhia N."/>
            <person name="Gnoj L."/>
            <person name="Schutz K."/>
            <person name="Huang E."/>
            <person name="Spiegel L."/>
            <person name="Sekhon M."/>
            <person name="Murray J."/>
            <person name="Sheet P."/>
            <person name="Cordes M."/>
            <person name="Abu-Threideh J."/>
            <person name="Stoneking T."/>
            <person name="Kalicki J."/>
            <person name="Graves T."/>
            <person name="Harmon G."/>
            <person name="Edwards J."/>
            <person name="Latreille P."/>
            <person name="Courtney L."/>
            <person name="Cloud J."/>
            <person name="Abbott A."/>
            <person name="Scott K."/>
            <person name="Johnson D."/>
            <person name="Minx P."/>
            <person name="Bentley D."/>
            <person name="Fulton B."/>
            <person name="Miller N."/>
            <person name="Greco T."/>
            <person name="Kemp K."/>
            <person name="Kramer J."/>
            <person name="Fulton L."/>
            <person name="Mardis E."/>
            <person name="Dante M."/>
            <person name="Pepin K."/>
            <person name="Hillier L.W."/>
            <person name="Nelson J."/>
            <person name="Spieth J."/>
            <person name="Ryan E."/>
            <person name="Andrews S."/>
            <person name="Geisel C."/>
            <person name="Layman D."/>
            <person name="Du H."/>
            <person name="Ali J."/>
            <person name="Berghoff A."/>
            <person name="Jones K."/>
            <person name="Drone K."/>
            <person name="Cotton M."/>
            <person name="Joshu C."/>
            <person name="Antonoiu B."/>
            <person name="Zidanic M."/>
            <person name="Strong C."/>
            <person name="Sun H."/>
            <person name="Lamar B."/>
            <person name="Yordan C."/>
            <person name="Ma P."/>
            <person name="Zhong J."/>
            <person name="Preston R."/>
            <person name="Vil D."/>
            <person name="Shekher M."/>
            <person name="Matero A."/>
            <person name="Shah R."/>
            <person name="Swaby I.K."/>
            <person name="O'Shaughnessy A."/>
            <person name="Rodriguez M."/>
            <person name="Hoffman J."/>
            <person name="Till S."/>
            <person name="Granat S."/>
            <person name="Shohdy N."/>
            <person name="Hasegawa A."/>
            <person name="Hameed A."/>
            <person name="Lodhi M."/>
            <person name="Johnson A."/>
            <person name="Chen E."/>
            <person name="Marra M.A."/>
            <person name="Martienssen R."/>
            <person name="McCombie W.R."/>
        </authorList>
    </citation>
    <scope>NUCLEOTIDE SEQUENCE [LARGE SCALE GENOMIC DNA]</scope>
    <source>
        <strain>cv. Columbia</strain>
    </source>
</reference>
<reference key="3">
    <citation type="journal article" date="2017" name="Plant J.">
        <title>Araport11: a complete reannotation of the Arabidopsis thaliana reference genome.</title>
        <authorList>
            <person name="Cheng C.Y."/>
            <person name="Krishnakumar V."/>
            <person name="Chan A.P."/>
            <person name="Thibaud-Nissen F."/>
            <person name="Schobel S."/>
            <person name="Town C.D."/>
        </authorList>
    </citation>
    <scope>GENOME REANNOTATION</scope>
    <source>
        <strain>cv. Columbia</strain>
    </source>
</reference>
<reference key="4">
    <citation type="journal article" date="2003" name="Science">
        <title>Empirical analysis of transcriptional activity in the Arabidopsis genome.</title>
        <authorList>
            <person name="Yamada K."/>
            <person name="Lim J."/>
            <person name="Dale J.M."/>
            <person name="Chen H."/>
            <person name="Shinn P."/>
            <person name="Palm C.J."/>
            <person name="Southwick A.M."/>
            <person name="Wu H.C."/>
            <person name="Kim C.J."/>
            <person name="Nguyen M."/>
            <person name="Pham P.K."/>
            <person name="Cheuk R.F."/>
            <person name="Karlin-Newmann G."/>
            <person name="Liu S.X."/>
            <person name="Lam B."/>
            <person name="Sakano H."/>
            <person name="Wu T."/>
            <person name="Yu G."/>
            <person name="Miranda M."/>
            <person name="Quach H.L."/>
            <person name="Tripp M."/>
            <person name="Chang C.H."/>
            <person name="Lee J.M."/>
            <person name="Toriumi M.J."/>
            <person name="Chan M.M."/>
            <person name="Tang C.C."/>
            <person name="Onodera C.S."/>
            <person name="Deng J.M."/>
            <person name="Akiyama K."/>
            <person name="Ansari Y."/>
            <person name="Arakawa T."/>
            <person name="Banh J."/>
            <person name="Banno F."/>
            <person name="Bowser L."/>
            <person name="Brooks S.Y."/>
            <person name="Carninci P."/>
            <person name="Chao Q."/>
            <person name="Choy N."/>
            <person name="Enju A."/>
            <person name="Goldsmith A.D."/>
            <person name="Gurjal M."/>
            <person name="Hansen N.F."/>
            <person name="Hayashizaki Y."/>
            <person name="Johnson-Hopson C."/>
            <person name="Hsuan V.W."/>
            <person name="Iida K."/>
            <person name="Karnes M."/>
            <person name="Khan S."/>
            <person name="Koesema E."/>
            <person name="Ishida J."/>
            <person name="Jiang P.X."/>
            <person name="Jones T."/>
            <person name="Kawai J."/>
            <person name="Kamiya A."/>
            <person name="Meyers C."/>
            <person name="Nakajima M."/>
            <person name="Narusaka M."/>
            <person name="Seki M."/>
            <person name="Sakurai T."/>
            <person name="Satou M."/>
            <person name="Tamse R."/>
            <person name="Vaysberg M."/>
            <person name="Wallender E.K."/>
            <person name="Wong C."/>
            <person name="Yamamura Y."/>
            <person name="Yuan S."/>
            <person name="Shinozaki K."/>
            <person name="Davis R.W."/>
            <person name="Theologis A."/>
            <person name="Ecker J.R."/>
        </authorList>
    </citation>
    <scope>NUCLEOTIDE SEQUENCE [LARGE SCALE MRNA]</scope>
    <source>
        <strain>cv. Columbia</strain>
    </source>
</reference>
<reference key="5">
    <citation type="submission" date="2002-03" db="EMBL/GenBank/DDBJ databases">
        <title>Full-length cDNA from Arabidopsis thaliana.</title>
        <authorList>
            <person name="Brover V.V."/>
            <person name="Troukhan M.E."/>
            <person name="Alexandrov N.A."/>
            <person name="Lu Y.-P."/>
            <person name="Flavell R.B."/>
            <person name="Feldmann K.A."/>
        </authorList>
    </citation>
    <scope>NUCLEOTIDE SEQUENCE [LARGE SCALE MRNA]</scope>
</reference>
<reference key="6">
    <citation type="journal article" date="2008" name="Proc. Natl. Acad. Sci. U.S.A.">
        <title>Dual-targeted tRNA-dependent amidotransferase ensures both mitochondrial and chloroplastic Gln-tRNAGln synthesis in plants.</title>
        <authorList>
            <person name="Pujol C."/>
            <person name="Bailly M."/>
            <person name="Kern D."/>
            <person name="Marechal-Drouard L."/>
            <person name="Becker H."/>
            <person name="Duchene A.-M."/>
        </authorList>
    </citation>
    <scope>FUNCTION</scope>
    <scope>SUBCELLULAR LOCATION</scope>
</reference>
<reference key="7">
    <citation type="journal article" date="2015" name="Plant Physiol.">
        <title>INTERMEDIATE CLEAVAGE PEPTIDASE55 modifies enzyme amino termini and alters protein stability in Arabidopsis mitochondria.</title>
        <authorList>
            <person name="Huang S."/>
            <person name="Nelson C.J."/>
            <person name="Li L."/>
            <person name="Taylor N.L."/>
            <person name="Stroeher E."/>
            <person name="Peteriet J."/>
            <person name="Millar A.H."/>
        </authorList>
    </citation>
    <scope>IDENTIFICATION BY MASS SPECTROMETRY</scope>
    <scope>CLEAVAGE OF TRANSIT PEPTIDE AFTER TYR-52</scope>
</reference>
<evidence type="ECO:0000255" key="1">
    <source>
        <dbReference type="HAMAP-Rule" id="MF_03149"/>
    </source>
</evidence>
<evidence type="ECO:0000269" key="2">
    <source>
    </source>
</evidence>
<evidence type="ECO:0000269" key="3">
    <source>
    </source>
</evidence>
<evidence type="ECO:0000305" key="4"/>
<evidence type="ECO:0000305" key="5">
    <source>
    </source>
</evidence>
<proteinExistence type="evidence at protein level"/>
<comment type="function">
    <text evidence="1 2">Allows the formation of correctly charged Gln-tRNA(Gln) through the transamidation of misacylated Glu-tRNA(Gln) in chloroplasts and mitochondria. The reaction takes place in the presence of glutamine and ATP through an activated gamma-phospho-Glu-tRNA(Gln).</text>
</comment>
<comment type="catalytic activity">
    <reaction evidence="1">
        <text>L-glutamyl-tRNA(Gln) + L-glutamine + ATP + H2O = L-glutaminyl-tRNA(Gln) + L-glutamate + ADP + phosphate + H(+)</text>
        <dbReference type="Rhea" id="RHEA:17521"/>
        <dbReference type="Rhea" id="RHEA-COMP:9681"/>
        <dbReference type="Rhea" id="RHEA-COMP:9684"/>
        <dbReference type="ChEBI" id="CHEBI:15377"/>
        <dbReference type="ChEBI" id="CHEBI:15378"/>
        <dbReference type="ChEBI" id="CHEBI:29985"/>
        <dbReference type="ChEBI" id="CHEBI:30616"/>
        <dbReference type="ChEBI" id="CHEBI:43474"/>
        <dbReference type="ChEBI" id="CHEBI:58359"/>
        <dbReference type="ChEBI" id="CHEBI:78520"/>
        <dbReference type="ChEBI" id="CHEBI:78521"/>
        <dbReference type="ChEBI" id="CHEBI:456216"/>
    </reaction>
</comment>
<comment type="subunit">
    <text evidence="1">Subunit of the heterotrimeric GatCAB amidotransferase (AdT) complex, composed of A, B and C subunits.</text>
</comment>
<comment type="subcellular location">
    <subcellularLocation>
        <location evidence="1 2 5">Mitochondrion</location>
    </subcellularLocation>
    <subcellularLocation>
        <location evidence="1 2">Plastid</location>
        <location evidence="1 2">Chloroplast</location>
    </subcellularLocation>
</comment>
<comment type="similarity">
    <text evidence="1">Belongs to the GatC family.</text>
</comment>
<comment type="sequence caution" evidence="4">
    <conflict type="erroneous gene model prediction">
        <sequence resource="EMBL-CDS" id="CAA21200"/>
    </conflict>
    <text>The predicted gene At4g32910 has been split into 2 genes: At4g32910 and At4g32915.</text>
</comment>
<comment type="sequence caution" evidence="4">
    <conflict type="erroneous gene model prediction">
        <sequence resource="EMBL-CDS" id="CAB80008"/>
    </conflict>
    <text>The predicted gene At4g32910 has been split into 2 genes: At4g32910 and At4g32915.</text>
</comment>
<feature type="transit peptide" description="Chloroplast and mitochondrion" evidence="3">
    <location>
        <begin position="1"/>
        <end position="52"/>
    </location>
</feature>
<feature type="chain" id="PRO_0000413317" description="Glutamyl-tRNA(Gln) amidotransferase subunit C, chloroplastic/mitochondrial">
    <location>
        <begin position="53"/>
        <end position="155"/>
    </location>
</feature>
<feature type="sequence conflict" description="In Ref. 5; AAM65443." evidence="4" ref="5">
    <original>R</original>
    <variation>I</variation>
    <location>
        <position position="4"/>
    </location>
</feature>
<feature type="sequence conflict" description="In Ref. 1; AAG29097." evidence="4" ref="1">
    <original>Q</original>
    <variation>L</variation>
    <location>
        <position position="41"/>
    </location>
</feature>
<feature type="sequence conflict" description="In Ref. 1; AAG29097." evidence="4" ref="1">
    <original>K</original>
    <variation>R</variation>
    <location>
        <position position="44"/>
    </location>
</feature>
<name>GATC_ARATH</name>
<gene>
    <name evidence="1" type="primary">GATC</name>
    <name type="ordered locus">At4g32915</name>
    <name type="ORF">F26P21</name>
</gene>
<dbReference type="EC" id="6.3.5.-" evidence="1"/>
<dbReference type="EMBL" id="AF240465">
    <property type="protein sequence ID" value="AAG29097.1"/>
    <property type="molecule type" value="mRNA"/>
</dbReference>
<dbReference type="EMBL" id="AL031804">
    <property type="protein sequence ID" value="CAA21200.1"/>
    <property type="status" value="ALT_SEQ"/>
    <property type="molecule type" value="Genomic_DNA"/>
</dbReference>
<dbReference type="EMBL" id="AL161582">
    <property type="protein sequence ID" value="CAB80008.1"/>
    <property type="status" value="ALT_SEQ"/>
    <property type="molecule type" value="Genomic_DNA"/>
</dbReference>
<dbReference type="EMBL" id="CP002687">
    <property type="protein sequence ID" value="AEE86143.1"/>
    <property type="molecule type" value="Genomic_DNA"/>
</dbReference>
<dbReference type="EMBL" id="AY087891">
    <property type="protein sequence ID" value="AAM65443.1"/>
    <property type="molecule type" value="mRNA"/>
</dbReference>
<dbReference type="PIR" id="T05299">
    <property type="entry name" value="T05299"/>
</dbReference>
<dbReference type="RefSeq" id="NP_567909.1">
    <property type="nucleotide sequence ID" value="NM_119445.4"/>
</dbReference>
<dbReference type="SMR" id="F4JV80"/>
<dbReference type="FunCoup" id="F4JV80">
    <property type="interactions" value="651"/>
</dbReference>
<dbReference type="STRING" id="3702.F4JV80"/>
<dbReference type="iPTMnet" id="F4JV80"/>
<dbReference type="PaxDb" id="3702-AT4G32915.1"/>
<dbReference type="ProteomicsDB" id="228966"/>
<dbReference type="EnsemblPlants" id="AT4G32915.1">
    <property type="protein sequence ID" value="AT4G32915.1"/>
    <property type="gene ID" value="AT4G32915"/>
</dbReference>
<dbReference type="GeneID" id="829428"/>
<dbReference type="Gramene" id="AT4G32915.1">
    <property type="protein sequence ID" value="AT4G32915.1"/>
    <property type="gene ID" value="AT4G32915"/>
</dbReference>
<dbReference type="KEGG" id="ath:AT4G32915"/>
<dbReference type="Araport" id="AT4G32915"/>
<dbReference type="TAIR" id="AT4G32915"/>
<dbReference type="eggNOG" id="KOG2271">
    <property type="taxonomic scope" value="Eukaryota"/>
</dbReference>
<dbReference type="HOGENOM" id="CLU_105899_5_0_1"/>
<dbReference type="InParanoid" id="F4JV80"/>
<dbReference type="OMA" id="CRDAIVE"/>
<dbReference type="OrthoDB" id="2020502at2759"/>
<dbReference type="PRO" id="PR:F4JV80"/>
<dbReference type="Proteomes" id="UP000006548">
    <property type="component" value="Chromosome 4"/>
</dbReference>
<dbReference type="ExpressionAtlas" id="F4JV80">
    <property type="expression patterns" value="baseline and differential"/>
</dbReference>
<dbReference type="GO" id="GO:0009507">
    <property type="term" value="C:chloroplast"/>
    <property type="evidence" value="ECO:0007005"/>
    <property type="project" value="TAIR"/>
</dbReference>
<dbReference type="GO" id="GO:0030956">
    <property type="term" value="C:glutamyl-tRNA(Gln) amidotransferase complex"/>
    <property type="evidence" value="ECO:0007669"/>
    <property type="project" value="UniProtKB-UniRule"/>
</dbReference>
<dbReference type="GO" id="GO:0005739">
    <property type="term" value="C:mitochondrion"/>
    <property type="evidence" value="ECO:0007669"/>
    <property type="project" value="UniProtKB-SubCell"/>
</dbReference>
<dbReference type="GO" id="GO:0005524">
    <property type="term" value="F:ATP binding"/>
    <property type="evidence" value="ECO:0007669"/>
    <property type="project" value="UniProtKB-KW"/>
</dbReference>
<dbReference type="GO" id="GO:0050567">
    <property type="term" value="F:glutaminyl-tRNA synthase (glutamine-hydrolyzing) activity"/>
    <property type="evidence" value="ECO:0007669"/>
    <property type="project" value="UniProtKB-UniRule"/>
</dbReference>
<dbReference type="GO" id="GO:0070681">
    <property type="term" value="P:glutaminyl-tRNAGln biosynthesis via transamidation"/>
    <property type="evidence" value="ECO:0007669"/>
    <property type="project" value="UniProtKB-UniRule"/>
</dbReference>
<dbReference type="GO" id="GO:0032543">
    <property type="term" value="P:mitochondrial translation"/>
    <property type="evidence" value="ECO:0007669"/>
    <property type="project" value="UniProtKB-UniRule"/>
</dbReference>
<dbReference type="GO" id="GO:0006450">
    <property type="term" value="P:regulation of translational fidelity"/>
    <property type="evidence" value="ECO:0007669"/>
    <property type="project" value="InterPro"/>
</dbReference>
<dbReference type="Gene3D" id="1.10.20.60">
    <property type="entry name" value="Glu-tRNAGln amidotransferase C subunit, N-terminal domain"/>
    <property type="match status" value="1"/>
</dbReference>
<dbReference type="HAMAP" id="MF_00122">
    <property type="entry name" value="GatC"/>
    <property type="match status" value="1"/>
</dbReference>
<dbReference type="InterPro" id="IPR036113">
    <property type="entry name" value="Asp/Glu-ADT_sf_sub_c"/>
</dbReference>
<dbReference type="InterPro" id="IPR003837">
    <property type="entry name" value="GatC"/>
</dbReference>
<dbReference type="NCBIfam" id="TIGR00135">
    <property type="entry name" value="gatC"/>
    <property type="match status" value="1"/>
</dbReference>
<dbReference type="PANTHER" id="PTHR15004">
    <property type="entry name" value="GLUTAMYL-TRNA(GLN) AMIDOTRANSFERASE SUBUNIT C, MITOCHONDRIAL"/>
    <property type="match status" value="1"/>
</dbReference>
<dbReference type="PANTHER" id="PTHR15004:SF0">
    <property type="entry name" value="GLUTAMYL-TRNA(GLN) AMIDOTRANSFERASE SUBUNIT C, MITOCHONDRIAL"/>
    <property type="match status" value="1"/>
</dbReference>
<dbReference type="Pfam" id="PF02686">
    <property type="entry name" value="GatC"/>
    <property type="match status" value="1"/>
</dbReference>
<dbReference type="SUPFAM" id="SSF141000">
    <property type="entry name" value="Glu-tRNAGln amidotransferase C subunit"/>
    <property type="match status" value="1"/>
</dbReference>
<organism>
    <name type="scientific">Arabidopsis thaliana</name>
    <name type="common">Mouse-ear cress</name>
    <dbReference type="NCBI Taxonomy" id="3702"/>
    <lineage>
        <taxon>Eukaryota</taxon>
        <taxon>Viridiplantae</taxon>
        <taxon>Streptophyta</taxon>
        <taxon>Embryophyta</taxon>
        <taxon>Tracheophyta</taxon>
        <taxon>Spermatophyta</taxon>
        <taxon>Magnoliopsida</taxon>
        <taxon>eudicotyledons</taxon>
        <taxon>Gunneridae</taxon>
        <taxon>Pentapetalae</taxon>
        <taxon>rosids</taxon>
        <taxon>malvids</taxon>
        <taxon>Brassicales</taxon>
        <taxon>Brassicaceae</taxon>
        <taxon>Camelineae</taxon>
        <taxon>Arabidopsis</taxon>
    </lineage>
</organism>
<protein>
    <recommendedName>
        <fullName evidence="1">Glutamyl-tRNA(Gln) amidotransferase subunit C, chloroplastic/mitochondrial</fullName>
        <shortName evidence="1">Glu-AdT subunit C</shortName>
        <ecNumber evidence="1">6.3.5.-</ecNumber>
    </recommendedName>
</protein>
<accession>F4JV80</accession>
<accession>O82634</accession>
<accession>Q8LAD3</accession>
<accession>Q9FV80</accession>
<keyword id="KW-0067">ATP-binding</keyword>
<keyword id="KW-0150">Chloroplast</keyword>
<keyword id="KW-0436">Ligase</keyword>
<keyword id="KW-0496">Mitochondrion</keyword>
<keyword id="KW-0547">Nucleotide-binding</keyword>
<keyword id="KW-0934">Plastid</keyword>
<keyword id="KW-0648">Protein biosynthesis</keyword>
<keyword id="KW-1185">Reference proteome</keyword>
<keyword id="KW-0809">Transit peptide</keyword>